<protein>
    <recommendedName>
        <fullName evidence="1">3-hydroxyacyl-[acyl-carrier-protein] dehydratase FabZ</fullName>
        <ecNumber evidence="1">4.2.1.59</ecNumber>
    </recommendedName>
    <alternativeName>
        <fullName evidence="1">(3R)-hydroxymyristoyl-[acyl-carrier-protein] dehydratase</fullName>
        <shortName evidence="1">(3R)-hydroxymyristoyl-ACP dehydrase</shortName>
    </alternativeName>
    <alternativeName>
        <fullName evidence="1">Beta-hydroxyacyl-ACP dehydratase</fullName>
    </alternativeName>
</protein>
<proteinExistence type="evidence at protein level"/>
<comment type="function">
    <text evidence="1">Involved in unsaturated fatty acids biosynthesis. Catalyzes the dehydration of short chain beta-hydroxyacyl-ACPs and long chain saturated and unsaturated beta-hydroxyacyl-ACPs.</text>
</comment>
<comment type="catalytic activity">
    <reaction evidence="1">
        <text>a (3R)-hydroxyacyl-[ACP] = a (2E)-enoyl-[ACP] + H2O</text>
        <dbReference type="Rhea" id="RHEA:13097"/>
        <dbReference type="Rhea" id="RHEA-COMP:9925"/>
        <dbReference type="Rhea" id="RHEA-COMP:9945"/>
        <dbReference type="ChEBI" id="CHEBI:15377"/>
        <dbReference type="ChEBI" id="CHEBI:78784"/>
        <dbReference type="ChEBI" id="CHEBI:78827"/>
        <dbReference type="EC" id="4.2.1.59"/>
    </reaction>
</comment>
<comment type="subcellular location">
    <subcellularLocation>
        <location evidence="1">Cytoplasm</location>
    </subcellularLocation>
</comment>
<comment type="similarity">
    <text evidence="1">Belongs to the thioester dehydratase family. FabZ subfamily.</text>
</comment>
<gene>
    <name evidence="1" type="primary">fabZ</name>
    <name type="ordered locus">YPO1055</name>
    <name type="ordered locus">y3124</name>
    <name type="ordered locus">YP_2795</name>
</gene>
<feature type="chain" id="PRO_0000091768" description="3-hydroxyacyl-[acyl-carrier-protein] dehydratase FabZ">
    <location>
        <begin position="1"/>
        <end position="181"/>
    </location>
</feature>
<feature type="active site" evidence="1">
    <location>
        <position position="54"/>
    </location>
</feature>
<feature type="sequence variant" description="In strain: KIM5 and 91001.">
    <location>
        <begin position="170"/>
        <end position="174"/>
    </location>
</feature>
<feature type="helix" evidence="2">
    <location>
        <begin position="10"/>
        <end position="16"/>
    </location>
</feature>
<feature type="strand" evidence="2">
    <location>
        <begin position="28"/>
        <end position="33"/>
    </location>
</feature>
<feature type="turn" evidence="2">
    <location>
        <begin position="34"/>
        <end position="36"/>
    </location>
</feature>
<feature type="strand" evidence="2">
    <location>
        <begin position="37"/>
        <end position="43"/>
    </location>
</feature>
<feature type="helix" evidence="2">
    <location>
        <begin position="49"/>
        <end position="53"/>
    </location>
</feature>
<feature type="helix" evidence="2">
    <location>
        <begin position="63"/>
        <end position="82"/>
    </location>
</feature>
<feature type="strand" evidence="2">
    <location>
        <begin position="90"/>
        <end position="101"/>
    </location>
</feature>
<feature type="strand" evidence="2">
    <location>
        <begin position="110"/>
        <end position="120"/>
    </location>
</feature>
<feature type="strand" evidence="2">
    <location>
        <begin position="125"/>
        <end position="133"/>
    </location>
</feature>
<feature type="strand" evidence="2">
    <location>
        <begin position="136"/>
        <end position="148"/>
    </location>
</feature>
<accession>Q8ZH57</accession>
<accession>Q0WHZ0</accession>
<keyword id="KW-0002">3D-structure</keyword>
<keyword id="KW-0963">Cytoplasm</keyword>
<keyword id="KW-0441">Lipid A biosynthesis</keyword>
<keyword id="KW-0444">Lipid biosynthesis</keyword>
<keyword id="KW-0443">Lipid metabolism</keyword>
<keyword id="KW-0456">Lyase</keyword>
<keyword id="KW-1185">Reference proteome</keyword>
<dbReference type="EC" id="4.2.1.59" evidence="1"/>
<dbReference type="EMBL" id="AL590842">
    <property type="protein sequence ID" value="CAL19720.1"/>
    <property type="molecule type" value="Genomic_DNA"/>
</dbReference>
<dbReference type="EMBL" id="AE009952">
    <property type="protein sequence ID" value="AAM86674.1"/>
    <property type="molecule type" value="Genomic_DNA"/>
</dbReference>
<dbReference type="EMBL" id="AE017042">
    <property type="protein sequence ID" value="AAS62979.1"/>
    <property type="molecule type" value="Genomic_DNA"/>
</dbReference>
<dbReference type="PIR" id="AF0129">
    <property type="entry name" value="AF0129"/>
</dbReference>
<dbReference type="RefSeq" id="WP_002212142.1">
    <property type="nucleotide sequence ID" value="NZ_VEZU01000030.1"/>
</dbReference>
<dbReference type="RefSeq" id="YP_002346098.1">
    <property type="nucleotide sequence ID" value="NC_003143.1"/>
</dbReference>
<dbReference type="PDB" id="5BUW">
    <property type="method" value="X-ray"/>
    <property type="resolution" value="1.80 A"/>
    <property type="chains" value="A/B=1-181"/>
</dbReference>
<dbReference type="PDBsum" id="5BUW"/>
<dbReference type="SMR" id="Q8ZH57"/>
<dbReference type="STRING" id="214092.YPO1055"/>
<dbReference type="PaxDb" id="214092-YPO1055"/>
<dbReference type="DNASU" id="1148071"/>
<dbReference type="EnsemblBacteria" id="AAS62979">
    <property type="protein sequence ID" value="AAS62979"/>
    <property type="gene ID" value="YP_2795"/>
</dbReference>
<dbReference type="GeneID" id="57977506"/>
<dbReference type="KEGG" id="ype:YPO1055"/>
<dbReference type="KEGG" id="ypk:y3124"/>
<dbReference type="KEGG" id="ypm:YP_2795"/>
<dbReference type="PATRIC" id="fig|214092.21.peg.1343"/>
<dbReference type="eggNOG" id="COG0764">
    <property type="taxonomic scope" value="Bacteria"/>
</dbReference>
<dbReference type="HOGENOM" id="CLU_078912_1_0_6"/>
<dbReference type="OMA" id="FPGRPLM"/>
<dbReference type="OrthoDB" id="9772788at2"/>
<dbReference type="Proteomes" id="UP000000815">
    <property type="component" value="Chromosome"/>
</dbReference>
<dbReference type="Proteomes" id="UP000001019">
    <property type="component" value="Chromosome"/>
</dbReference>
<dbReference type="Proteomes" id="UP000002490">
    <property type="component" value="Chromosome"/>
</dbReference>
<dbReference type="GO" id="GO:0005737">
    <property type="term" value="C:cytoplasm"/>
    <property type="evidence" value="ECO:0007669"/>
    <property type="project" value="UniProtKB-SubCell"/>
</dbReference>
<dbReference type="GO" id="GO:0016020">
    <property type="term" value="C:membrane"/>
    <property type="evidence" value="ECO:0007669"/>
    <property type="project" value="GOC"/>
</dbReference>
<dbReference type="GO" id="GO:0019171">
    <property type="term" value="F:(3R)-hydroxyacyl-[acyl-carrier-protein] dehydratase activity"/>
    <property type="evidence" value="ECO:0007669"/>
    <property type="project" value="UniProtKB-EC"/>
</dbReference>
<dbReference type="GO" id="GO:0006633">
    <property type="term" value="P:fatty acid biosynthetic process"/>
    <property type="evidence" value="ECO:0007669"/>
    <property type="project" value="UniProtKB-UniRule"/>
</dbReference>
<dbReference type="GO" id="GO:0009245">
    <property type="term" value="P:lipid A biosynthetic process"/>
    <property type="evidence" value="ECO:0007669"/>
    <property type="project" value="UniProtKB-UniRule"/>
</dbReference>
<dbReference type="CDD" id="cd01288">
    <property type="entry name" value="FabZ"/>
    <property type="match status" value="1"/>
</dbReference>
<dbReference type="FunFam" id="3.10.129.10:FF:000001">
    <property type="entry name" value="3-hydroxyacyl-[acyl-carrier-protein] dehydratase FabZ"/>
    <property type="match status" value="1"/>
</dbReference>
<dbReference type="Gene3D" id="3.10.129.10">
    <property type="entry name" value="Hotdog Thioesterase"/>
    <property type="match status" value="1"/>
</dbReference>
<dbReference type="HAMAP" id="MF_00406">
    <property type="entry name" value="FabZ"/>
    <property type="match status" value="1"/>
</dbReference>
<dbReference type="InterPro" id="IPR013114">
    <property type="entry name" value="FabA_FabZ"/>
</dbReference>
<dbReference type="InterPro" id="IPR010084">
    <property type="entry name" value="FabZ"/>
</dbReference>
<dbReference type="InterPro" id="IPR029069">
    <property type="entry name" value="HotDog_dom_sf"/>
</dbReference>
<dbReference type="NCBIfam" id="TIGR01750">
    <property type="entry name" value="fabZ"/>
    <property type="match status" value="1"/>
</dbReference>
<dbReference type="NCBIfam" id="NF000582">
    <property type="entry name" value="PRK00006.1"/>
    <property type="match status" value="1"/>
</dbReference>
<dbReference type="PANTHER" id="PTHR30272">
    <property type="entry name" value="3-HYDROXYACYL-[ACYL-CARRIER-PROTEIN] DEHYDRATASE"/>
    <property type="match status" value="1"/>
</dbReference>
<dbReference type="PANTHER" id="PTHR30272:SF1">
    <property type="entry name" value="3-HYDROXYACYL-[ACYL-CARRIER-PROTEIN] DEHYDRATASE"/>
    <property type="match status" value="1"/>
</dbReference>
<dbReference type="Pfam" id="PF07977">
    <property type="entry name" value="FabA"/>
    <property type="match status" value="1"/>
</dbReference>
<dbReference type="SUPFAM" id="SSF54637">
    <property type="entry name" value="Thioesterase/thiol ester dehydrase-isomerase"/>
    <property type="match status" value="1"/>
</dbReference>
<organism>
    <name type="scientific">Yersinia pestis</name>
    <dbReference type="NCBI Taxonomy" id="632"/>
    <lineage>
        <taxon>Bacteria</taxon>
        <taxon>Pseudomonadati</taxon>
        <taxon>Pseudomonadota</taxon>
        <taxon>Gammaproteobacteria</taxon>
        <taxon>Enterobacterales</taxon>
        <taxon>Yersiniaceae</taxon>
        <taxon>Yersinia</taxon>
    </lineage>
</organism>
<name>FABZ_YERPE</name>
<sequence length="181" mass="20170">MTTDTHTLHIEEILDLLPHRFPFLLVDRVLDFEEGKFLRAVKNVSFNEPFFQGHFPGKPIFPGVLILEAMAQATGILAFKSRGKLEPGELYYFAGIDEARFKRPVVPGDQMIMEVEFVKERRGLTRFTGVAKVDGEIVCTATMMCARSKPAAPAESVVVKPDVVKPDVVKPDVVNPVVKES</sequence>
<evidence type="ECO:0000255" key="1">
    <source>
        <dbReference type="HAMAP-Rule" id="MF_00406"/>
    </source>
</evidence>
<evidence type="ECO:0007829" key="2">
    <source>
        <dbReference type="PDB" id="5BUW"/>
    </source>
</evidence>
<reference key="1">
    <citation type="journal article" date="2001" name="Nature">
        <title>Genome sequence of Yersinia pestis, the causative agent of plague.</title>
        <authorList>
            <person name="Parkhill J."/>
            <person name="Wren B.W."/>
            <person name="Thomson N.R."/>
            <person name="Titball R.W."/>
            <person name="Holden M.T.G."/>
            <person name="Prentice M.B."/>
            <person name="Sebaihia M."/>
            <person name="James K.D."/>
            <person name="Churcher C.M."/>
            <person name="Mungall K.L."/>
            <person name="Baker S."/>
            <person name="Basham D."/>
            <person name="Bentley S.D."/>
            <person name="Brooks K."/>
            <person name="Cerdeno-Tarraga A.-M."/>
            <person name="Chillingworth T."/>
            <person name="Cronin A."/>
            <person name="Davies R.M."/>
            <person name="Davis P."/>
            <person name="Dougan G."/>
            <person name="Feltwell T."/>
            <person name="Hamlin N."/>
            <person name="Holroyd S."/>
            <person name="Jagels K."/>
            <person name="Karlyshev A.V."/>
            <person name="Leather S."/>
            <person name="Moule S."/>
            <person name="Oyston P.C.F."/>
            <person name="Quail M.A."/>
            <person name="Rutherford K.M."/>
            <person name="Simmonds M."/>
            <person name="Skelton J."/>
            <person name="Stevens K."/>
            <person name="Whitehead S."/>
            <person name="Barrell B.G."/>
        </authorList>
    </citation>
    <scope>NUCLEOTIDE SEQUENCE [LARGE SCALE GENOMIC DNA]</scope>
    <source>
        <strain>CO-92 / Biovar Orientalis</strain>
    </source>
</reference>
<reference key="2">
    <citation type="journal article" date="2002" name="J. Bacteriol.">
        <title>Genome sequence of Yersinia pestis KIM.</title>
        <authorList>
            <person name="Deng W."/>
            <person name="Burland V."/>
            <person name="Plunkett G. III"/>
            <person name="Boutin A."/>
            <person name="Mayhew G.F."/>
            <person name="Liss P."/>
            <person name="Perna N.T."/>
            <person name="Rose D.J."/>
            <person name="Mau B."/>
            <person name="Zhou S."/>
            <person name="Schwartz D.C."/>
            <person name="Fetherston J.D."/>
            <person name="Lindler L.E."/>
            <person name="Brubaker R.R."/>
            <person name="Plano G.V."/>
            <person name="Straley S.C."/>
            <person name="McDonough K.A."/>
            <person name="Nilles M.L."/>
            <person name="Matson J.S."/>
            <person name="Blattner F.R."/>
            <person name="Perry R.D."/>
        </authorList>
    </citation>
    <scope>NUCLEOTIDE SEQUENCE [LARGE SCALE GENOMIC DNA]</scope>
    <source>
        <strain>KIM10+ / Biovar Mediaevalis</strain>
    </source>
</reference>
<reference key="3">
    <citation type="journal article" date="2004" name="DNA Res.">
        <title>Complete genome sequence of Yersinia pestis strain 91001, an isolate avirulent to humans.</title>
        <authorList>
            <person name="Song Y."/>
            <person name="Tong Z."/>
            <person name="Wang J."/>
            <person name="Wang L."/>
            <person name="Guo Z."/>
            <person name="Han Y."/>
            <person name="Zhang J."/>
            <person name="Pei D."/>
            <person name="Zhou D."/>
            <person name="Qin H."/>
            <person name="Pang X."/>
            <person name="Han Y."/>
            <person name="Zhai J."/>
            <person name="Li M."/>
            <person name="Cui B."/>
            <person name="Qi Z."/>
            <person name="Jin L."/>
            <person name="Dai R."/>
            <person name="Chen F."/>
            <person name="Li S."/>
            <person name="Ye C."/>
            <person name="Du Z."/>
            <person name="Lin W."/>
            <person name="Wang J."/>
            <person name="Yu J."/>
            <person name="Yang H."/>
            <person name="Wang J."/>
            <person name="Huang P."/>
            <person name="Yang R."/>
        </authorList>
    </citation>
    <scope>NUCLEOTIDE SEQUENCE [LARGE SCALE GENOMIC DNA]</scope>
    <source>
        <strain>91001 / Biovar Mediaevalis</strain>
    </source>
</reference>